<proteinExistence type="inferred from homology"/>
<feature type="chain" id="PRO_1000007783" description="5'-nucleotidase SurE">
    <location>
        <begin position="1"/>
        <end position="255"/>
    </location>
</feature>
<feature type="binding site" evidence="1">
    <location>
        <position position="8"/>
    </location>
    <ligand>
        <name>a divalent metal cation</name>
        <dbReference type="ChEBI" id="CHEBI:60240"/>
    </ligand>
</feature>
<feature type="binding site" evidence="1">
    <location>
        <position position="9"/>
    </location>
    <ligand>
        <name>a divalent metal cation</name>
        <dbReference type="ChEBI" id="CHEBI:60240"/>
    </ligand>
</feature>
<feature type="binding site" evidence="1">
    <location>
        <position position="40"/>
    </location>
    <ligand>
        <name>a divalent metal cation</name>
        <dbReference type="ChEBI" id="CHEBI:60240"/>
    </ligand>
</feature>
<feature type="binding site" evidence="1">
    <location>
        <position position="93"/>
    </location>
    <ligand>
        <name>a divalent metal cation</name>
        <dbReference type="ChEBI" id="CHEBI:60240"/>
    </ligand>
</feature>
<keyword id="KW-0963">Cytoplasm</keyword>
<keyword id="KW-0378">Hydrolase</keyword>
<keyword id="KW-0479">Metal-binding</keyword>
<keyword id="KW-0547">Nucleotide-binding</keyword>
<organism>
    <name type="scientific">Rhodopseudomonas palustris (strain BisB5)</name>
    <dbReference type="NCBI Taxonomy" id="316057"/>
    <lineage>
        <taxon>Bacteria</taxon>
        <taxon>Pseudomonadati</taxon>
        <taxon>Pseudomonadota</taxon>
        <taxon>Alphaproteobacteria</taxon>
        <taxon>Hyphomicrobiales</taxon>
        <taxon>Nitrobacteraceae</taxon>
        <taxon>Rhodopseudomonas</taxon>
    </lineage>
</organism>
<comment type="function">
    <text evidence="1">Nucleotidase that shows phosphatase activity on nucleoside 5'-monophosphates.</text>
</comment>
<comment type="catalytic activity">
    <reaction evidence="1">
        <text>a ribonucleoside 5'-phosphate + H2O = a ribonucleoside + phosphate</text>
        <dbReference type="Rhea" id="RHEA:12484"/>
        <dbReference type="ChEBI" id="CHEBI:15377"/>
        <dbReference type="ChEBI" id="CHEBI:18254"/>
        <dbReference type="ChEBI" id="CHEBI:43474"/>
        <dbReference type="ChEBI" id="CHEBI:58043"/>
        <dbReference type="EC" id="3.1.3.5"/>
    </reaction>
</comment>
<comment type="cofactor">
    <cofactor evidence="1">
        <name>a divalent metal cation</name>
        <dbReference type="ChEBI" id="CHEBI:60240"/>
    </cofactor>
    <text evidence="1">Binds 1 divalent metal cation per subunit.</text>
</comment>
<comment type="subcellular location">
    <subcellularLocation>
        <location evidence="1">Cytoplasm</location>
    </subcellularLocation>
</comment>
<comment type="similarity">
    <text evidence="1">Belongs to the SurE nucleotidase family.</text>
</comment>
<sequence>MRILCTNDDGIHAPGLKVVEEIARALSDDVWVVAPELDQSGVSHSLSLNDPLRLREVGPRHFAVRGTPTDCVIMGARHILADKAPDLVLSGVNRGRNVAEDVVYSGTIAGALEGTILGLPSFALSQEFTLETRNAPLWDTAKAHGPEILRKAIKAGVPKNTVININFPACAPDEVAGVMVTRQGKRNQGFLRIDERHDGRGNPYFWIGFERIAVVDMPAEGTDLAALAAKYVSVTPLRLDRTDEAFSATLAKTLG</sequence>
<name>SURE_RHOPS</name>
<accession>Q136H7</accession>
<reference key="1">
    <citation type="submission" date="2006-03" db="EMBL/GenBank/DDBJ databases">
        <title>Complete sequence of Rhodopseudomonas palustris BisB5.</title>
        <authorList>
            <consortium name="US DOE Joint Genome Institute"/>
            <person name="Copeland A."/>
            <person name="Lucas S."/>
            <person name="Lapidus A."/>
            <person name="Barry K."/>
            <person name="Detter J.C."/>
            <person name="Glavina del Rio T."/>
            <person name="Hammon N."/>
            <person name="Israni S."/>
            <person name="Dalin E."/>
            <person name="Tice H."/>
            <person name="Pitluck S."/>
            <person name="Chain P."/>
            <person name="Malfatti S."/>
            <person name="Shin M."/>
            <person name="Vergez L."/>
            <person name="Schmutz J."/>
            <person name="Larimer F."/>
            <person name="Land M."/>
            <person name="Hauser L."/>
            <person name="Pelletier D.A."/>
            <person name="Kyrpides N."/>
            <person name="Lykidis A."/>
            <person name="Oda Y."/>
            <person name="Harwood C.S."/>
            <person name="Richardson P."/>
        </authorList>
    </citation>
    <scope>NUCLEOTIDE SEQUENCE [LARGE SCALE GENOMIC DNA]</scope>
    <source>
        <strain>BisB5</strain>
    </source>
</reference>
<dbReference type="EC" id="3.1.3.5" evidence="1"/>
<dbReference type="EMBL" id="CP000283">
    <property type="protein sequence ID" value="ABE40012.1"/>
    <property type="molecule type" value="Genomic_DNA"/>
</dbReference>
<dbReference type="SMR" id="Q136H7"/>
<dbReference type="STRING" id="316057.RPD_2784"/>
<dbReference type="KEGG" id="rpd:RPD_2784"/>
<dbReference type="eggNOG" id="COG0496">
    <property type="taxonomic scope" value="Bacteria"/>
</dbReference>
<dbReference type="HOGENOM" id="CLU_045192_1_2_5"/>
<dbReference type="BioCyc" id="RPAL316057:RPD_RS13985-MONOMER"/>
<dbReference type="Proteomes" id="UP000001818">
    <property type="component" value="Chromosome"/>
</dbReference>
<dbReference type="GO" id="GO:0005737">
    <property type="term" value="C:cytoplasm"/>
    <property type="evidence" value="ECO:0007669"/>
    <property type="project" value="UniProtKB-SubCell"/>
</dbReference>
<dbReference type="GO" id="GO:0008254">
    <property type="term" value="F:3'-nucleotidase activity"/>
    <property type="evidence" value="ECO:0007669"/>
    <property type="project" value="TreeGrafter"/>
</dbReference>
<dbReference type="GO" id="GO:0008253">
    <property type="term" value="F:5'-nucleotidase activity"/>
    <property type="evidence" value="ECO:0007669"/>
    <property type="project" value="UniProtKB-UniRule"/>
</dbReference>
<dbReference type="GO" id="GO:0004309">
    <property type="term" value="F:exopolyphosphatase activity"/>
    <property type="evidence" value="ECO:0007669"/>
    <property type="project" value="TreeGrafter"/>
</dbReference>
<dbReference type="GO" id="GO:0046872">
    <property type="term" value="F:metal ion binding"/>
    <property type="evidence" value="ECO:0007669"/>
    <property type="project" value="UniProtKB-UniRule"/>
</dbReference>
<dbReference type="GO" id="GO:0000166">
    <property type="term" value="F:nucleotide binding"/>
    <property type="evidence" value="ECO:0007669"/>
    <property type="project" value="UniProtKB-KW"/>
</dbReference>
<dbReference type="FunFam" id="3.40.1210.10:FF:000001">
    <property type="entry name" value="5'/3'-nucleotidase SurE"/>
    <property type="match status" value="1"/>
</dbReference>
<dbReference type="Gene3D" id="3.40.1210.10">
    <property type="entry name" value="Survival protein SurE-like phosphatase/nucleotidase"/>
    <property type="match status" value="1"/>
</dbReference>
<dbReference type="HAMAP" id="MF_00060">
    <property type="entry name" value="SurE"/>
    <property type="match status" value="1"/>
</dbReference>
<dbReference type="InterPro" id="IPR030048">
    <property type="entry name" value="SurE"/>
</dbReference>
<dbReference type="InterPro" id="IPR002828">
    <property type="entry name" value="SurE-like_Pase/nucleotidase"/>
</dbReference>
<dbReference type="InterPro" id="IPR036523">
    <property type="entry name" value="SurE-like_sf"/>
</dbReference>
<dbReference type="NCBIfam" id="NF001490">
    <property type="entry name" value="PRK00346.1-4"/>
    <property type="match status" value="1"/>
</dbReference>
<dbReference type="NCBIfam" id="TIGR00087">
    <property type="entry name" value="surE"/>
    <property type="match status" value="1"/>
</dbReference>
<dbReference type="PANTHER" id="PTHR30457">
    <property type="entry name" value="5'-NUCLEOTIDASE SURE"/>
    <property type="match status" value="1"/>
</dbReference>
<dbReference type="PANTHER" id="PTHR30457:SF12">
    <property type="entry name" value="5'_3'-NUCLEOTIDASE SURE"/>
    <property type="match status" value="1"/>
</dbReference>
<dbReference type="Pfam" id="PF01975">
    <property type="entry name" value="SurE"/>
    <property type="match status" value="1"/>
</dbReference>
<dbReference type="SUPFAM" id="SSF64167">
    <property type="entry name" value="SurE-like"/>
    <property type="match status" value="1"/>
</dbReference>
<evidence type="ECO:0000255" key="1">
    <source>
        <dbReference type="HAMAP-Rule" id="MF_00060"/>
    </source>
</evidence>
<gene>
    <name evidence="1" type="primary">surE</name>
    <name type="ordered locus">RPD_2784</name>
</gene>
<protein>
    <recommendedName>
        <fullName evidence="1">5'-nucleotidase SurE</fullName>
        <ecNumber evidence="1">3.1.3.5</ecNumber>
    </recommendedName>
    <alternativeName>
        <fullName evidence="1">Nucleoside 5'-monophosphate phosphohydrolase</fullName>
    </alternativeName>
</protein>